<gene>
    <name evidence="1" type="primary">rhlB</name>
    <name type="ordered locus">PBPRA3542</name>
</gene>
<evidence type="ECO:0000255" key="1">
    <source>
        <dbReference type="HAMAP-Rule" id="MF_00661"/>
    </source>
</evidence>
<evidence type="ECO:0000256" key="2">
    <source>
        <dbReference type="SAM" id="MobiDB-lite"/>
    </source>
</evidence>
<reference key="1">
    <citation type="journal article" date="2005" name="Science">
        <title>Life at depth: Photobacterium profundum genome sequence and expression analysis.</title>
        <authorList>
            <person name="Vezzi A."/>
            <person name="Campanaro S."/>
            <person name="D'Angelo M."/>
            <person name="Simonato F."/>
            <person name="Vitulo N."/>
            <person name="Lauro F.M."/>
            <person name="Cestaro A."/>
            <person name="Malacrida G."/>
            <person name="Simionati B."/>
            <person name="Cannata N."/>
            <person name="Romualdi C."/>
            <person name="Bartlett D.H."/>
            <person name="Valle G."/>
        </authorList>
    </citation>
    <scope>NUCLEOTIDE SEQUENCE [LARGE SCALE GENOMIC DNA]</scope>
    <source>
        <strain>ATCC BAA-1253 / SS9</strain>
    </source>
</reference>
<protein>
    <recommendedName>
        <fullName evidence="1">ATP-dependent RNA helicase RhlB</fullName>
        <ecNumber evidence="1">3.6.4.13</ecNumber>
    </recommendedName>
</protein>
<accession>Q6LLL5</accession>
<proteinExistence type="inferred from homology"/>
<organism>
    <name type="scientific">Photobacterium profundum (strain SS9)</name>
    <dbReference type="NCBI Taxonomy" id="298386"/>
    <lineage>
        <taxon>Bacteria</taxon>
        <taxon>Pseudomonadati</taxon>
        <taxon>Pseudomonadota</taxon>
        <taxon>Gammaproteobacteria</taxon>
        <taxon>Vibrionales</taxon>
        <taxon>Vibrionaceae</taxon>
        <taxon>Photobacterium</taxon>
    </lineage>
</organism>
<feature type="chain" id="PRO_0000200778" description="ATP-dependent RNA helicase RhlB">
    <location>
        <begin position="1"/>
        <end position="437"/>
    </location>
</feature>
<feature type="domain" description="Helicase ATP-binding" evidence="1">
    <location>
        <begin position="40"/>
        <end position="219"/>
    </location>
</feature>
<feature type="domain" description="Helicase C-terminal" evidence="1">
    <location>
        <begin position="245"/>
        <end position="390"/>
    </location>
</feature>
<feature type="region of interest" description="Disordered" evidence="2">
    <location>
        <begin position="395"/>
        <end position="437"/>
    </location>
</feature>
<feature type="short sequence motif" description="Q motif">
    <location>
        <begin position="9"/>
        <end position="37"/>
    </location>
</feature>
<feature type="short sequence motif" description="DEAD box">
    <location>
        <begin position="165"/>
        <end position="168"/>
    </location>
</feature>
<feature type="compositionally biased region" description="Low complexity" evidence="2">
    <location>
        <begin position="400"/>
        <end position="424"/>
    </location>
</feature>
<feature type="compositionally biased region" description="Basic residues" evidence="2">
    <location>
        <begin position="425"/>
        <end position="437"/>
    </location>
</feature>
<feature type="binding site" evidence="1">
    <location>
        <begin position="53"/>
        <end position="60"/>
    </location>
    <ligand>
        <name>ATP</name>
        <dbReference type="ChEBI" id="CHEBI:30616"/>
    </ligand>
</feature>
<comment type="function">
    <text evidence="1">DEAD-box RNA helicase involved in RNA degradation. Has RNA-dependent ATPase activity and unwinds double-stranded RNA.</text>
</comment>
<comment type="catalytic activity">
    <reaction evidence="1">
        <text>ATP + H2O = ADP + phosphate + H(+)</text>
        <dbReference type="Rhea" id="RHEA:13065"/>
        <dbReference type="ChEBI" id="CHEBI:15377"/>
        <dbReference type="ChEBI" id="CHEBI:15378"/>
        <dbReference type="ChEBI" id="CHEBI:30616"/>
        <dbReference type="ChEBI" id="CHEBI:43474"/>
        <dbReference type="ChEBI" id="CHEBI:456216"/>
        <dbReference type="EC" id="3.6.4.13"/>
    </reaction>
</comment>
<comment type="subunit">
    <text evidence="1">Component of the RNA degradosome, which is a multiprotein complex involved in RNA processing and mRNA degradation.</text>
</comment>
<comment type="subcellular location">
    <subcellularLocation>
        <location evidence="1">Cytoplasm</location>
    </subcellularLocation>
</comment>
<comment type="similarity">
    <text evidence="1">Belongs to the DEAD box helicase family. RhlB subfamily.</text>
</comment>
<name>RHLB_PHOPR</name>
<sequence length="437" mass="49061">MKTTHITEQKFADLGLEPTVLEGLDAQGFHYCTPIQALALPVVLTGQDIAGQAQTGTGKTLAFLTATFNYLLLNPASDERKTNQPRAIIMAPTRELAIQIYNDAAPLLASTGLKAGLAYGGEAYEKQQKVFAEGVDILIGTCGRIIDFYKQRVIDLASIQVVVLDEADRMFDLGFIKDIRFLFRRMPAPKARLNMLFSATLSYRVKELAFEHMNSPESVVVEPNQKTGHLIQEELFYPSNQEKMRLLQTLIEEEWPDRAIIFANTKHRCEDIWGHLAADNHRVGLLNGDVPQKKRVRILEQFTQGDIDILVATDVAARGLHIPQVTHVYNYDLPDDAEDYVHRIGRTGRAGESGSSISFACEEYAINLPAIETYIEHPIPLSKYNSEALLDELPAPLRLQRTPRQGGNRRPNGNRQGQGQSRPRNNNRRHPQSQKQQ</sequence>
<dbReference type="EC" id="3.6.4.13" evidence="1"/>
<dbReference type="EMBL" id="CR378674">
    <property type="protein sequence ID" value="CAG21813.1"/>
    <property type="molecule type" value="Genomic_DNA"/>
</dbReference>
<dbReference type="RefSeq" id="WP_011220053.1">
    <property type="nucleotide sequence ID" value="NC_006370.1"/>
</dbReference>
<dbReference type="SMR" id="Q6LLL5"/>
<dbReference type="STRING" id="298386.PBPRA3542"/>
<dbReference type="KEGG" id="ppr:PBPRA3542"/>
<dbReference type="eggNOG" id="COG0513">
    <property type="taxonomic scope" value="Bacteria"/>
</dbReference>
<dbReference type="HOGENOM" id="CLU_003041_28_3_6"/>
<dbReference type="Proteomes" id="UP000000593">
    <property type="component" value="Chromosome 1"/>
</dbReference>
<dbReference type="GO" id="GO:0005829">
    <property type="term" value="C:cytosol"/>
    <property type="evidence" value="ECO:0007669"/>
    <property type="project" value="TreeGrafter"/>
</dbReference>
<dbReference type="GO" id="GO:0005524">
    <property type="term" value="F:ATP binding"/>
    <property type="evidence" value="ECO:0007669"/>
    <property type="project" value="UniProtKB-UniRule"/>
</dbReference>
<dbReference type="GO" id="GO:0016887">
    <property type="term" value="F:ATP hydrolysis activity"/>
    <property type="evidence" value="ECO:0007669"/>
    <property type="project" value="RHEA"/>
</dbReference>
<dbReference type="GO" id="GO:0003723">
    <property type="term" value="F:RNA binding"/>
    <property type="evidence" value="ECO:0007669"/>
    <property type="project" value="UniProtKB-UniRule"/>
</dbReference>
<dbReference type="GO" id="GO:0003724">
    <property type="term" value="F:RNA helicase activity"/>
    <property type="evidence" value="ECO:0007669"/>
    <property type="project" value="UniProtKB-UniRule"/>
</dbReference>
<dbReference type="GO" id="GO:0006401">
    <property type="term" value="P:RNA catabolic process"/>
    <property type="evidence" value="ECO:0007669"/>
    <property type="project" value="UniProtKB-UniRule"/>
</dbReference>
<dbReference type="CDD" id="cd00268">
    <property type="entry name" value="DEADc"/>
    <property type="match status" value="1"/>
</dbReference>
<dbReference type="CDD" id="cd18787">
    <property type="entry name" value="SF2_C_DEAD"/>
    <property type="match status" value="1"/>
</dbReference>
<dbReference type="FunFam" id="3.40.50.300:FF:000312">
    <property type="entry name" value="ATP-dependent RNA helicase RhlB"/>
    <property type="match status" value="1"/>
</dbReference>
<dbReference type="Gene3D" id="3.40.50.300">
    <property type="entry name" value="P-loop containing nucleotide triphosphate hydrolases"/>
    <property type="match status" value="2"/>
</dbReference>
<dbReference type="HAMAP" id="MF_00661">
    <property type="entry name" value="DEAD_helicase_RhlB"/>
    <property type="match status" value="1"/>
</dbReference>
<dbReference type="InterPro" id="IPR011545">
    <property type="entry name" value="DEAD/DEAH_box_helicase_dom"/>
</dbReference>
<dbReference type="InterPro" id="IPR050079">
    <property type="entry name" value="DEAD_box_RNA_helicase"/>
</dbReference>
<dbReference type="InterPro" id="IPR014001">
    <property type="entry name" value="Helicase_ATP-bd"/>
</dbReference>
<dbReference type="InterPro" id="IPR001650">
    <property type="entry name" value="Helicase_C-like"/>
</dbReference>
<dbReference type="InterPro" id="IPR027417">
    <property type="entry name" value="P-loop_NTPase"/>
</dbReference>
<dbReference type="InterPro" id="IPR000629">
    <property type="entry name" value="RNA-helicase_DEAD-box_CS"/>
</dbReference>
<dbReference type="InterPro" id="IPR023554">
    <property type="entry name" value="RNA_helicase_ATP-dep_RhlB"/>
</dbReference>
<dbReference type="InterPro" id="IPR014014">
    <property type="entry name" value="RNA_helicase_DEAD_Q_motif"/>
</dbReference>
<dbReference type="NCBIfam" id="NF003419">
    <property type="entry name" value="PRK04837.1"/>
    <property type="match status" value="1"/>
</dbReference>
<dbReference type="PANTHER" id="PTHR47959:SF10">
    <property type="entry name" value="ATP-DEPENDENT RNA HELICASE RHLB"/>
    <property type="match status" value="1"/>
</dbReference>
<dbReference type="PANTHER" id="PTHR47959">
    <property type="entry name" value="ATP-DEPENDENT RNA HELICASE RHLE-RELATED"/>
    <property type="match status" value="1"/>
</dbReference>
<dbReference type="Pfam" id="PF00270">
    <property type="entry name" value="DEAD"/>
    <property type="match status" value="1"/>
</dbReference>
<dbReference type="Pfam" id="PF00271">
    <property type="entry name" value="Helicase_C"/>
    <property type="match status" value="1"/>
</dbReference>
<dbReference type="SMART" id="SM00487">
    <property type="entry name" value="DEXDc"/>
    <property type="match status" value="1"/>
</dbReference>
<dbReference type="SMART" id="SM00490">
    <property type="entry name" value="HELICc"/>
    <property type="match status" value="1"/>
</dbReference>
<dbReference type="SUPFAM" id="SSF52540">
    <property type="entry name" value="P-loop containing nucleoside triphosphate hydrolases"/>
    <property type="match status" value="1"/>
</dbReference>
<dbReference type="PROSITE" id="PS00039">
    <property type="entry name" value="DEAD_ATP_HELICASE"/>
    <property type="match status" value="1"/>
</dbReference>
<dbReference type="PROSITE" id="PS51192">
    <property type="entry name" value="HELICASE_ATP_BIND_1"/>
    <property type="match status" value="1"/>
</dbReference>
<dbReference type="PROSITE" id="PS51194">
    <property type="entry name" value="HELICASE_CTER"/>
    <property type="match status" value="1"/>
</dbReference>
<dbReference type="PROSITE" id="PS51195">
    <property type="entry name" value="Q_MOTIF"/>
    <property type="match status" value="1"/>
</dbReference>
<keyword id="KW-0067">ATP-binding</keyword>
<keyword id="KW-0963">Cytoplasm</keyword>
<keyword id="KW-0347">Helicase</keyword>
<keyword id="KW-0378">Hydrolase</keyword>
<keyword id="KW-0547">Nucleotide-binding</keyword>
<keyword id="KW-1185">Reference proteome</keyword>
<keyword id="KW-0694">RNA-binding</keyword>